<dbReference type="EC" id="1.3.3.3" evidence="1"/>
<dbReference type="EMBL" id="BA000031">
    <property type="protein sequence ID" value="BAC61297.1"/>
    <property type="molecule type" value="Genomic_DNA"/>
</dbReference>
<dbReference type="RefSeq" id="NP_799413.1">
    <property type="nucleotide sequence ID" value="NC_004603.1"/>
</dbReference>
<dbReference type="RefSeq" id="WP_005461426.1">
    <property type="nucleotide sequence ID" value="NC_004603.1"/>
</dbReference>
<dbReference type="SMR" id="Q87KE3"/>
<dbReference type="GeneID" id="1190633"/>
<dbReference type="KEGG" id="vpa:VP3034"/>
<dbReference type="PATRIC" id="fig|223926.6.peg.2918"/>
<dbReference type="eggNOG" id="COG0408">
    <property type="taxonomic scope" value="Bacteria"/>
</dbReference>
<dbReference type="HOGENOM" id="CLU_026169_0_1_6"/>
<dbReference type="UniPathway" id="UPA00251">
    <property type="reaction ID" value="UER00322"/>
</dbReference>
<dbReference type="Proteomes" id="UP000002493">
    <property type="component" value="Chromosome 1"/>
</dbReference>
<dbReference type="GO" id="GO:0005737">
    <property type="term" value="C:cytoplasm"/>
    <property type="evidence" value="ECO:0007669"/>
    <property type="project" value="UniProtKB-SubCell"/>
</dbReference>
<dbReference type="GO" id="GO:0004109">
    <property type="term" value="F:coproporphyrinogen oxidase activity"/>
    <property type="evidence" value="ECO:0007669"/>
    <property type="project" value="UniProtKB-UniRule"/>
</dbReference>
<dbReference type="GO" id="GO:0046872">
    <property type="term" value="F:metal ion binding"/>
    <property type="evidence" value="ECO:0007669"/>
    <property type="project" value="UniProtKB-KW"/>
</dbReference>
<dbReference type="GO" id="GO:0042803">
    <property type="term" value="F:protein homodimerization activity"/>
    <property type="evidence" value="ECO:0000250"/>
    <property type="project" value="UniProtKB"/>
</dbReference>
<dbReference type="GO" id="GO:0006782">
    <property type="term" value="P:protoporphyrinogen IX biosynthetic process"/>
    <property type="evidence" value="ECO:0007669"/>
    <property type="project" value="UniProtKB-UniRule"/>
</dbReference>
<dbReference type="FunFam" id="3.40.1500.10:FF:000001">
    <property type="entry name" value="Oxygen-dependent coproporphyrinogen-III oxidase"/>
    <property type="match status" value="1"/>
</dbReference>
<dbReference type="Gene3D" id="3.40.1500.10">
    <property type="entry name" value="Coproporphyrinogen III oxidase, aerobic"/>
    <property type="match status" value="1"/>
</dbReference>
<dbReference type="HAMAP" id="MF_00333">
    <property type="entry name" value="Coprogen_oxidas"/>
    <property type="match status" value="1"/>
</dbReference>
<dbReference type="InterPro" id="IPR001260">
    <property type="entry name" value="Coprogen_oxidase_aer"/>
</dbReference>
<dbReference type="InterPro" id="IPR036406">
    <property type="entry name" value="Coprogen_oxidase_aer_sf"/>
</dbReference>
<dbReference type="InterPro" id="IPR018375">
    <property type="entry name" value="Coprogen_oxidase_CS"/>
</dbReference>
<dbReference type="NCBIfam" id="NF003727">
    <property type="entry name" value="PRK05330.1"/>
    <property type="match status" value="1"/>
</dbReference>
<dbReference type="PANTHER" id="PTHR10755">
    <property type="entry name" value="COPROPORPHYRINOGEN III OXIDASE, MITOCHONDRIAL"/>
    <property type="match status" value="1"/>
</dbReference>
<dbReference type="PANTHER" id="PTHR10755:SF0">
    <property type="entry name" value="OXYGEN-DEPENDENT COPROPORPHYRINOGEN-III OXIDASE, MITOCHONDRIAL"/>
    <property type="match status" value="1"/>
</dbReference>
<dbReference type="Pfam" id="PF01218">
    <property type="entry name" value="Coprogen_oxidas"/>
    <property type="match status" value="1"/>
</dbReference>
<dbReference type="PIRSF" id="PIRSF000166">
    <property type="entry name" value="Coproporphyri_ox"/>
    <property type="match status" value="1"/>
</dbReference>
<dbReference type="PRINTS" id="PR00073">
    <property type="entry name" value="COPRGNOXDASE"/>
</dbReference>
<dbReference type="SUPFAM" id="SSF102886">
    <property type="entry name" value="Coproporphyrinogen III oxidase"/>
    <property type="match status" value="1"/>
</dbReference>
<dbReference type="PROSITE" id="PS01021">
    <property type="entry name" value="COPROGEN_OXIDASE"/>
    <property type="match status" value="1"/>
</dbReference>
<protein>
    <recommendedName>
        <fullName evidence="1">Oxygen-dependent coproporphyrinogen-III oxidase</fullName>
        <shortName evidence="1">CPO</shortName>
        <shortName evidence="1">Coprogen oxidase</shortName>
        <shortName evidence="1">Coproporphyrinogenase</shortName>
        <ecNumber evidence="1">1.3.3.3</ecNumber>
    </recommendedName>
</protein>
<keyword id="KW-0963">Cytoplasm</keyword>
<keyword id="KW-0350">Heme biosynthesis</keyword>
<keyword id="KW-0479">Metal-binding</keyword>
<keyword id="KW-0560">Oxidoreductase</keyword>
<keyword id="KW-0627">Porphyrin biosynthesis</keyword>
<sequence length="305" mass="35394">MSAIDKYAVKQFLMSLQDSICQQLEQEDGKAVFVEDAWHREPGERLGGGGRSRVLRDGLVFEQGGVNFSHVEGKEMPASATAHRPELAGRRFEAMGVSLVIHPKNPYVPTSHANVRFFIAEKEGEEPIWWFGGGFDLTPFYPFEEDCQSWHDTAKAICAPFGEDVYAEHKAWCDKYFFLPHRNETRGVGGLFFDDLNHWEFDKCFDYIKAVGEGYCQAYLPIVSRRKDIEYGEREREFQLYRRGRYVEFNLVYDRGTLFGLQSGGRTESILMSMPPLARWEYRYEPEAGTPEAELYERYLKPREW</sequence>
<gene>
    <name evidence="1" type="primary">hemF</name>
    <name type="ordered locus">VP3034</name>
</gene>
<accession>Q87KE3</accession>
<comment type="function">
    <text evidence="1">Involved in the heme biosynthesis. Catalyzes the aerobic oxidative decarboxylation of propionate groups of rings A and B of coproporphyrinogen-III to yield the vinyl groups in protoporphyrinogen-IX.</text>
</comment>
<comment type="catalytic activity">
    <reaction evidence="1">
        <text>coproporphyrinogen III + O2 + 2 H(+) = protoporphyrinogen IX + 2 CO2 + 2 H2O</text>
        <dbReference type="Rhea" id="RHEA:18257"/>
        <dbReference type="ChEBI" id="CHEBI:15377"/>
        <dbReference type="ChEBI" id="CHEBI:15378"/>
        <dbReference type="ChEBI" id="CHEBI:15379"/>
        <dbReference type="ChEBI" id="CHEBI:16526"/>
        <dbReference type="ChEBI" id="CHEBI:57307"/>
        <dbReference type="ChEBI" id="CHEBI:57309"/>
        <dbReference type="EC" id="1.3.3.3"/>
    </reaction>
</comment>
<comment type="cofactor">
    <cofactor evidence="1">
        <name>a divalent metal cation</name>
        <dbReference type="ChEBI" id="CHEBI:60240"/>
    </cofactor>
</comment>
<comment type="pathway">
    <text evidence="1">Porphyrin-containing compound metabolism; protoporphyrin-IX biosynthesis; protoporphyrinogen-IX from coproporphyrinogen-III (O2 route): step 1/1.</text>
</comment>
<comment type="subunit">
    <text evidence="1">Homodimer.</text>
</comment>
<comment type="subcellular location">
    <subcellularLocation>
        <location evidence="1">Cytoplasm</location>
    </subcellularLocation>
</comment>
<comment type="similarity">
    <text evidence="1">Belongs to the aerobic coproporphyrinogen-III oxidase family.</text>
</comment>
<reference key="1">
    <citation type="journal article" date="2003" name="Lancet">
        <title>Genome sequence of Vibrio parahaemolyticus: a pathogenic mechanism distinct from that of V. cholerae.</title>
        <authorList>
            <person name="Makino K."/>
            <person name="Oshima K."/>
            <person name="Kurokawa K."/>
            <person name="Yokoyama K."/>
            <person name="Uda T."/>
            <person name="Tagomori K."/>
            <person name="Iijima Y."/>
            <person name="Najima M."/>
            <person name="Nakano M."/>
            <person name="Yamashita A."/>
            <person name="Kubota Y."/>
            <person name="Kimura S."/>
            <person name="Yasunaga T."/>
            <person name="Honda T."/>
            <person name="Shinagawa H."/>
            <person name="Hattori M."/>
            <person name="Iida T."/>
        </authorList>
    </citation>
    <scope>NUCLEOTIDE SEQUENCE [LARGE SCALE GENOMIC DNA]</scope>
    <source>
        <strain>RIMD 2210633</strain>
    </source>
</reference>
<name>HEM6_VIBPA</name>
<proteinExistence type="inferred from homology"/>
<evidence type="ECO:0000255" key="1">
    <source>
        <dbReference type="HAMAP-Rule" id="MF_00333"/>
    </source>
</evidence>
<feature type="chain" id="PRO_0000109927" description="Oxygen-dependent coproporphyrinogen-III oxidase">
    <location>
        <begin position="1"/>
        <end position="305"/>
    </location>
</feature>
<feature type="region of interest" description="Important for dimerization" evidence="1">
    <location>
        <begin position="246"/>
        <end position="281"/>
    </location>
</feature>
<feature type="active site" description="Proton donor" evidence="1">
    <location>
        <position position="112"/>
    </location>
</feature>
<feature type="binding site" evidence="1">
    <location>
        <position position="98"/>
    </location>
    <ligand>
        <name>substrate</name>
    </ligand>
</feature>
<feature type="binding site" evidence="1">
    <location>
        <position position="102"/>
    </location>
    <ligand>
        <name>a divalent metal cation</name>
        <dbReference type="ChEBI" id="CHEBI:60240"/>
    </ligand>
</feature>
<feature type="binding site" evidence="1">
    <location>
        <position position="112"/>
    </location>
    <ligand>
        <name>a divalent metal cation</name>
        <dbReference type="ChEBI" id="CHEBI:60240"/>
    </ligand>
</feature>
<feature type="binding site" evidence="1">
    <location>
        <begin position="114"/>
        <end position="116"/>
    </location>
    <ligand>
        <name>substrate</name>
    </ligand>
</feature>
<feature type="binding site" evidence="1">
    <location>
        <position position="151"/>
    </location>
    <ligand>
        <name>a divalent metal cation</name>
        <dbReference type="ChEBI" id="CHEBI:60240"/>
    </ligand>
</feature>
<feature type="binding site" evidence="1">
    <location>
        <position position="181"/>
    </location>
    <ligand>
        <name>a divalent metal cation</name>
        <dbReference type="ChEBI" id="CHEBI:60240"/>
    </ligand>
</feature>
<feature type="binding site" evidence="1">
    <location>
        <begin position="264"/>
        <end position="266"/>
    </location>
    <ligand>
        <name>substrate</name>
    </ligand>
</feature>
<feature type="site" description="Important for dimerization" evidence="1">
    <location>
        <position position="181"/>
    </location>
</feature>
<organism>
    <name type="scientific">Vibrio parahaemolyticus serotype O3:K6 (strain RIMD 2210633)</name>
    <dbReference type="NCBI Taxonomy" id="223926"/>
    <lineage>
        <taxon>Bacteria</taxon>
        <taxon>Pseudomonadati</taxon>
        <taxon>Pseudomonadota</taxon>
        <taxon>Gammaproteobacteria</taxon>
        <taxon>Vibrionales</taxon>
        <taxon>Vibrionaceae</taxon>
        <taxon>Vibrio</taxon>
    </lineage>
</organism>